<comment type="function">
    <text evidence="1">Catalyzes the phosphorylation of pantothenate (Pan), the first step in CoA biosynthesis.</text>
</comment>
<comment type="catalytic activity">
    <reaction evidence="1">
        <text>(R)-pantothenate + ATP = (R)-4'-phosphopantothenate + ADP + H(+)</text>
        <dbReference type="Rhea" id="RHEA:16373"/>
        <dbReference type="ChEBI" id="CHEBI:10986"/>
        <dbReference type="ChEBI" id="CHEBI:15378"/>
        <dbReference type="ChEBI" id="CHEBI:29032"/>
        <dbReference type="ChEBI" id="CHEBI:30616"/>
        <dbReference type="ChEBI" id="CHEBI:456216"/>
        <dbReference type="EC" id="2.7.1.33"/>
    </reaction>
</comment>
<comment type="cofactor">
    <cofactor evidence="1">
        <name>NH4(+)</name>
        <dbReference type="ChEBI" id="CHEBI:28938"/>
    </cofactor>
    <cofactor evidence="1">
        <name>K(+)</name>
        <dbReference type="ChEBI" id="CHEBI:29103"/>
    </cofactor>
    <text evidence="1">A monovalent cation. Ammonium or potassium.</text>
</comment>
<comment type="pathway">
    <text evidence="1">Cofactor biosynthesis; coenzyme A biosynthesis; CoA from (R)-pantothenate: step 1/5.</text>
</comment>
<comment type="subunit">
    <text evidence="1">Homodimer.</text>
</comment>
<comment type="subcellular location">
    <subcellularLocation>
        <location evidence="1">Cytoplasm</location>
    </subcellularLocation>
</comment>
<comment type="similarity">
    <text evidence="1">Belongs to the type III pantothenate kinase family.</text>
</comment>
<dbReference type="EC" id="2.7.1.33" evidence="1"/>
<dbReference type="EMBL" id="CP000514">
    <property type="protein sequence ID" value="ABM17801.1"/>
    <property type="molecule type" value="Genomic_DNA"/>
</dbReference>
<dbReference type="RefSeq" id="WP_011784233.1">
    <property type="nucleotide sequence ID" value="NC_008740.1"/>
</dbReference>
<dbReference type="SMR" id="A1TYI2"/>
<dbReference type="STRING" id="351348.Maqu_0703"/>
<dbReference type="KEGG" id="maq:Maqu_0703"/>
<dbReference type="eggNOG" id="COG1521">
    <property type="taxonomic scope" value="Bacteria"/>
</dbReference>
<dbReference type="HOGENOM" id="CLU_066627_0_0_6"/>
<dbReference type="OrthoDB" id="9781305at2"/>
<dbReference type="UniPathway" id="UPA00241">
    <property type="reaction ID" value="UER00352"/>
</dbReference>
<dbReference type="Proteomes" id="UP000000998">
    <property type="component" value="Chromosome"/>
</dbReference>
<dbReference type="GO" id="GO:0005737">
    <property type="term" value="C:cytoplasm"/>
    <property type="evidence" value="ECO:0007669"/>
    <property type="project" value="UniProtKB-SubCell"/>
</dbReference>
<dbReference type="GO" id="GO:0005524">
    <property type="term" value="F:ATP binding"/>
    <property type="evidence" value="ECO:0007669"/>
    <property type="project" value="UniProtKB-UniRule"/>
</dbReference>
<dbReference type="GO" id="GO:0046872">
    <property type="term" value="F:metal ion binding"/>
    <property type="evidence" value="ECO:0007669"/>
    <property type="project" value="UniProtKB-KW"/>
</dbReference>
<dbReference type="GO" id="GO:0004594">
    <property type="term" value="F:pantothenate kinase activity"/>
    <property type="evidence" value="ECO:0007669"/>
    <property type="project" value="UniProtKB-UniRule"/>
</dbReference>
<dbReference type="GO" id="GO:0015937">
    <property type="term" value="P:coenzyme A biosynthetic process"/>
    <property type="evidence" value="ECO:0007669"/>
    <property type="project" value="UniProtKB-UniRule"/>
</dbReference>
<dbReference type="CDD" id="cd24015">
    <property type="entry name" value="ASKHA_NBD_PanK-III"/>
    <property type="match status" value="1"/>
</dbReference>
<dbReference type="Gene3D" id="3.30.420.40">
    <property type="match status" value="2"/>
</dbReference>
<dbReference type="HAMAP" id="MF_01274">
    <property type="entry name" value="Pantothen_kinase_3"/>
    <property type="match status" value="1"/>
</dbReference>
<dbReference type="InterPro" id="IPR043129">
    <property type="entry name" value="ATPase_NBD"/>
</dbReference>
<dbReference type="InterPro" id="IPR004619">
    <property type="entry name" value="Type_III_PanK"/>
</dbReference>
<dbReference type="NCBIfam" id="TIGR00671">
    <property type="entry name" value="baf"/>
    <property type="match status" value="1"/>
</dbReference>
<dbReference type="PANTHER" id="PTHR34265">
    <property type="entry name" value="TYPE III PANTOTHENATE KINASE"/>
    <property type="match status" value="1"/>
</dbReference>
<dbReference type="PANTHER" id="PTHR34265:SF1">
    <property type="entry name" value="TYPE III PANTOTHENATE KINASE"/>
    <property type="match status" value="1"/>
</dbReference>
<dbReference type="Pfam" id="PF03309">
    <property type="entry name" value="Pan_kinase"/>
    <property type="match status" value="1"/>
</dbReference>
<dbReference type="SUPFAM" id="SSF53067">
    <property type="entry name" value="Actin-like ATPase domain"/>
    <property type="match status" value="2"/>
</dbReference>
<accession>A1TYI2</accession>
<evidence type="ECO:0000255" key="1">
    <source>
        <dbReference type="HAMAP-Rule" id="MF_01274"/>
    </source>
</evidence>
<name>COAX_MARN8</name>
<protein>
    <recommendedName>
        <fullName evidence="1">Type III pantothenate kinase</fullName>
        <ecNumber evidence="1">2.7.1.33</ecNumber>
    </recommendedName>
    <alternativeName>
        <fullName evidence="1">PanK-III</fullName>
    </alternativeName>
    <alternativeName>
        <fullName evidence="1">Pantothenic acid kinase</fullName>
    </alternativeName>
</protein>
<gene>
    <name evidence="1" type="primary">coaX</name>
    <name type="ordered locus">Maqu_0703</name>
</gene>
<reference key="1">
    <citation type="journal article" date="2011" name="Appl. Environ. Microbiol.">
        <title>Genomic potential of Marinobacter aquaeolei, a biogeochemical 'opportunitroph'.</title>
        <authorList>
            <person name="Singer E."/>
            <person name="Webb E.A."/>
            <person name="Nelson W.C."/>
            <person name="Heidelberg J.F."/>
            <person name="Ivanova N."/>
            <person name="Pati A."/>
            <person name="Edwards K.J."/>
        </authorList>
    </citation>
    <scope>NUCLEOTIDE SEQUENCE [LARGE SCALE GENOMIC DNA]</scope>
    <source>
        <strain>ATCC 700491 / DSM 11845 / VT8</strain>
    </source>
</reference>
<proteinExistence type="inferred from homology"/>
<organism>
    <name type="scientific">Marinobacter nauticus (strain ATCC 700491 / DSM 11845 / VT8)</name>
    <name type="common">Marinobacter aquaeolei</name>
    <dbReference type="NCBI Taxonomy" id="351348"/>
    <lineage>
        <taxon>Bacteria</taxon>
        <taxon>Pseudomonadati</taxon>
        <taxon>Pseudomonadota</taxon>
        <taxon>Gammaproteobacteria</taxon>
        <taxon>Pseudomonadales</taxon>
        <taxon>Marinobacteraceae</taxon>
        <taxon>Marinobacter</taxon>
    </lineage>
</organism>
<keyword id="KW-0067">ATP-binding</keyword>
<keyword id="KW-0173">Coenzyme A biosynthesis</keyword>
<keyword id="KW-0963">Cytoplasm</keyword>
<keyword id="KW-0418">Kinase</keyword>
<keyword id="KW-0479">Metal-binding</keyword>
<keyword id="KW-0547">Nucleotide-binding</keyword>
<keyword id="KW-0630">Potassium</keyword>
<keyword id="KW-0808">Transferase</keyword>
<sequence>MILLIDAGNTRLKWRLAGTGGPLEGAGVMADAEPLIGLSGYWSDIDRILVSTVASESARAQLHELLLAGAKVPVEYCWAESTRDGLSNSYGDVSRMGADRWHAMLAGWVRCKASFAVVDAGSAVTVDYVNAGGRHLGGYILPGLQMMRRSLKVDAARIGFEQSEQLDTRPGQSTGECVNHGLAWLTEALVQRIHRDAKAFGLSAIYLTGGDARRLQALGLEANVVEGMVLDGLERIASAGVL</sequence>
<feature type="chain" id="PRO_1000054387" description="Type III pantothenate kinase">
    <location>
        <begin position="1"/>
        <end position="242"/>
    </location>
</feature>
<feature type="active site" description="Proton acceptor" evidence="1">
    <location>
        <position position="99"/>
    </location>
</feature>
<feature type="binding site" evidence="1">
    <location>
        <begin position="6"/>
        <end position="13"/>
    </location>
    <ligand>
        <name>ATP</name>
        <dbReference type="ChEBI" id="CHEBI:30616"/>
    </ligand>
</feature>
<feature type="binding site" evidence="1">
    <location>
        <position position="90"/>
    </location>
    <ligand>
        <name>substrate</name>
    </ligand>
</feature>
<feature type="binding site" evidence="1">
    <location>
        <begin position="97"/>
        <end position="100"/>
    </location>
    <ligand>
        <name>substrate</name>
    </ligand>
</feature>
<feature type="binding site" evidence="1">
    <location>
        <position position="119"/>
    </location>
    <ligand>
        <name>K(+)</name>
        <dbReference type="ChEBI" id="CHEBI:29103"/>
    </ligand>
</feature>
<feature type="binding site" evidence="1">
    <location>
        <position position="122"/>
    </location>
    <ligand>
        <name>ATP</name>
        <dbReference type="ChEBI" id="CHEBI:30616"/>
    </ligand>
</feature>
<feature type="binding site" evidence="1">
    <location>
        <position position="174"/>
    </location>
    <ligand>
        <name>substrate</name>
    </ligand>
</feature>